<dbReference type="EC" id="3.6.1.-" evidence="1"/>
<dbReference type="EMBL" id="AM933172">
    <property type="protein sequence ID" value="CAR32792.1"/>
    <property type="molecule type" value="Genomic_DNA"/>
</dbReference>
<dbReference type="RefSeq" id="WP_000381544.1">
    <property type="nucleotide sequence ID" value="NC_011294.1"/>
</dbReference>
<dbReference type="SMR" id="B5R2U5"/>
<dbReference type="KEGG" id="set:SEN1212"/>
<dbReference type="HOGENOM" id="CLU_040940_5_2_6"/>
<dbReference type="Proteomes" id="UP000000613">
    <property type="component" value="Chromosome"/>
</dbReference>
<dbReference type="GO" id="GO:0010945">
    <property type="term" value="F:coenzyme A diphosphatase activity"/>
    <property type="evidence" value="ECO:0007669"/>
    <property type="project" value="InterPro"/>
</dbReference>
<dbReference type="GO" id="GO:0000287">
    <property type="term" value="F:magnesium ion binding"/>
    <property type="evidence" value="ECO:0007669"/>
    <property type="project" value="UniProtKB-UniRule"/>
</dbReference>
<dbReference type="GO" id="GO:0030145">
    <property type="term" value="F:manganese ion binding"/>
    <property type="evidence" value="ECO:0007669"/>
    <property type="project" value="UniProtKB-UniRule"/>
</dbReference>
<dbReference type="GO" id="GO:0009132">
    <property type="term" value="P:nucleoside diphosphate metabolic process"/>
    <property type="evidence" value="ECO:0007669"/>
    <property type="project" value="InterPro"/>
</dbReference>
<dbReference type="CDD" id="cd03426">
    <property type="entry name" value="NUDIX_CoAse_Nudt7"/>
    <property type="match status" value="1"/>
</dbReference>
<dbReference type="Gene3D" id="3.90.79.10">
    <property type="entry name" value="Nucleoside Triphosphate Pyrophosphohydrolase"/>
    <property type="match status" value="1"/>
</dbReference>
<dbReference type="HAMAP" id="MF_01592">
    <property type="entry name" value="Nudix_NudL"/>
    <property type="match status" value="1"/>
</dbReference>
<dbReference type="InterPro" id="IPR045121">
    <property type="entry name" value="CoAse"/>
</dbReference>
<dbReference type="InterPro" id="IPR015797">
    <property type="entry name" value="NUDIX_hydrolase-like_dom_sf"/>
</dbReference>
<dbReference type="InterPro" id="IPR000086">
    <property type="entry name" value="NUDIX_hydrolase_dom"/>
</dbReference>
<dbReference type="InterPro" id="IPR000059">
    <property type="entry name" value="NUDIX_hydrolase_NudL_CS"/>
</dbReference>
<dbReference type="InterPro" id="IPR023735">
    <property type="entry name" value="Nudix_NudL"/>
</dbReference>
<dbReference type="NCBIfam" id="NF007980">
    <property type="entry name" value="PRK10707.1"/>
    <property type="match status" value="1"/>
</dbReference>
<dbReference type="PANTHER" id="PTHR12992:SF11">
    <property type="entry name" value="MITOCHONDRIAL COENZYME A DIPHOSPHATASE NUDT8"/>
    <property type="match status" value="1"/>
</dbReference>
<dbReference type="PANTHER" id="PTHR12992">
    <property type="entry name" value="NUDIX HYDROLASE"/>
    <property type="match status" value="1"/>
</dbReference>
<dbReference type="Pfam" id="PF00293">
    <property type="entry name" value="NUDIX"/>
    <property type="match status" value="1"/>
</dbReference>
<dbReference type="SUPFAM" id="SSF55811">
    <property type="entry name" value="Nudix"/>
    <property type="match status" value="1"/>
</dbReference>
<dbReference type="PROSITE" id="PS51462">
    <property type="entry name" value="NUDIX"/>
    <property type="match status" value="1"/>
</dbReference>
<dbReference type="PROSITE" id="PS01293">
    <property type="entry name" value="NUDIX_COA"/>
    <property type="match status" value="1"/>
</dbReference>
<protein>
    <recommendedName>
        <fullName evidence="1">Uncharacterized Nudix hydrolase NudL</fullName>
        <ecNumber evidence="1">3.6.1.-</ecNumber>
    </recommendedName>
</protein>
<gene>
    <name evidence="1" type="primary">nudL</name>
    <name type="ordered locus">SEN1212</name>
</gene>
<evidence type="ECO:0000255" key="1">
    <source>
        <dbReference type="HAMAP-Rule" id="MF_01592"/>
    </source>
</evidence>
<accession>B5R2U5</accession>
<feature type="chain" id="PRO_1000147823" description="Uncharacterized Nudix hydrolase NudL">
    <location>
        <begin position="1"/>
        <end position="192"/>
    </location>
</feature>
<feature type="domain" description="Nudix hydrolase" evidence="1">
    <location>
        <begin position="29"/>
        <end position="160"/>
    </location>
</feature>
<feature type="short sequence motif" description="Nudix box">
    <location>
        <begin position="67"/>
        <end position="89"/>
    </location>
</feature>
<feature type="binding site" evidence="1">
    <location>
        <position position="83"/>
    </location>
    <ligand>
        <name>Mg(2+)</name>
        <dbReference type="ChEBI" id="CHEBI:18420"/>
    </ligand>
</feature>
<feature type="binding site" evidence="1">
    <location>
        <position position="87"/>
    </location>
    <ligand>
        <name>Mg(2+)</name>
        <dbReference type="ChEBI" id="CHEBI:18420"/>
    </ligand>
</feature>
<organism>
    <name type="scientific">Salmonella enteritidis PT4 (strain P125109)</name>
    <dbReference type="NCBI Taxonomy" id="550537"/>
    <lineage>
        <taxon>Bacteria</taxon>
        <taxon>Pseudomonadati</taxon>
        <taxon>Pseudomonadota</taxon>
        <taxon>Gammaproteobacteria</taxon>
        <taxon>Enterobacterales</taxon>
        <taxon>Enterobacteriaceae</taxon>
        <taxon>Salmonella</taxon>
    </lineage>
</organism>
<comment type="function">
    <text evidence="1">Probably mediates the hydrolysis of some nucleoside diphosphate derivatives.</text>
</comment>
<comment type="cofactor">
    <cofactor evidence="1">
        <name>Mn(2+)</name>
        <dbReference type="ChEBI" id="CHEBI:29035"/>
    </cofactor>
    <cofactor evidence="1">
        <name>Mg(2+)</name>
        <dbReference type="ChEBI" id="CHEBI:18420"/>
    </cofactor>
</comment>
<comment type="similarity">
    <text evidence="1">Belongs to the Nudix hydrolase family. PCD1 subfamily.</text>
</comment>
<keyword id="KW-0378">Hydrolase</keyword>
<keyword id="KW-0460">Magnesium</keyword>
<keyword id="KW-0464">Manganese</keyword>
<keyword id="KW-0479">Metal-binding</keyword>
<sequence>MDTSRLTLDHFLSRFQLLRPQMTHETLNQRQAAVLIPVVRRPQPGLLLTQRAIHLRKHAGQVAFPGGAVDSTDASLIAAALREAQEEVAIPPQAVEVIGVLPPVDSVTGFQVTPVVGIIPPNLPWRASEDEVSAVFEMPLAQALQLGRYHPLDVYRRGNSHRVWLSWYEHYFVWGMTANILRELALQIGVKP</sequence>
<proteinExistence type="inferred from homology"/>
<name>NUDL_SALEP</name>
<reference key="1">
    <citation type="journal article" date="2008" name="Genome Res.">
        <title>Comparative genome analysis of Salmonella enteritidis PT4 and Salmonella gallinarum 287/91 provides insights into evolutionary and host adaptation pathways.</title>
        <authorList>
            <person name="Thomson N.R."/>
            <person name="Clayton D.J."/>
            <person name="Windhorst D."/>
            <person name="Vernikos G."/>
            <person name="Davidson S."/>
            <person name="Churcher C."/>
            <person name="Quail M.A."/>
            <person name="Stevens M."/>
            <person name="Jones M.A."/>
            <person name="Watson M."/>
            <person name="Barron A."/>
            <person name="Layton A."/>
            <person name="Pickard D."/>
            <person name="Kingsley R.A."/>
            <person name="Bignell A."/>
            <person name="Clark L."/>
            <person name="Harris B."/>
            <person name="Ormond D."/>
            <person name="Abdellah Z."/>
            <person name="Brooks K."/>
            <person name="Cherevach I."/>
            <person name="Chillingworth T."/>
            <person name="Woodward J."/>
            <person name="Norberczak H."/>
            <person name="Lord A."/>
            <person name="Arrowsmith C."/>
            <person name="Jagels K."/>
            <person name="Moule S."/>
            <person name="Mungall K."/>
            <person name="Saunders M."/>
            <person name="Whitehead S."/>
            <person name="Chabalgoity J.A."/>
            <person name="Maskell D."/>
            <person name="Humphreys T."/>
            <person name="Roberts M."/>
            <person name="Barrow P.A."/>
            <person name="Dougan G."/>
            <person name="Parkhill J."/>
        </authorList>
    </citation>
    <scope>NUCLEOTIDE SEQUENCE [LARGE SCALE GENOMIC DNA]</scope>
    <source>
        <strain>P125109</strain>
    </source>
</reference>